<evidence type="ECO:0000250" key="1">
    <source>
        <dbReference type="UniProtKB" id="Q922H2"/>
    </source>
</evidence>
<evidence type="ECO:0000255" key="2"/>
<evidence type="ECO:0000255" key="3">
    <source>
        <dbReference type="PROSITE-ProRule" id="PRU00107"/>
    </source>
</evidence>
<evidence type="ECO:0000256" key="4">
    <source>
        <dbReference type="SAM" id="MobiDB-lite"/>
    </source>
</evidence>
<evidence type="ECO:0000269" key="5">
    <source>
    </source>
</evidence>
<evidence type="ECO:0000269" key="6">
    <source>
    </source>
</evidence>
<evidence type="ECO:0000269" key="7">
    <source>
    </source>
</evidence>
<evidence type="ECO:0000269" key="8">
    <source>
    </source>
</evidence>
<evidence type="ECO:0000269" key="9">
    <source>
    </source>
</evidence>
<evidence type="ECO:0000269" key="10">
    <source>
    </source>
</evidence>
<evidence type="ECO:0000269" key="11">
    <source>
    </source>
</evidence>
<evidence type="ECO:0000269" key="12">
    <source>
    </source>
</evidence>
<evidence type="ECO:0000269" key="13">
    <source>
    </source>
</evidence>
<evidence type="ECO:0000269" key="14">
    <source>
    </source>
</evidence>
<evidence type="ECO:0000269" key="15">
    <source>
    </source>
</evidence>
<evidence type="ECO:0000269" key="16">
    <source>
    </source>
</evidence>
<evidence type="ECO:0000269" key="17">
    <source>
    </source>
</evidence>
<evidence type="ECO:0000303" key="18">
    <source>
    </source>
</evidence>
<evidence type="ECO:0000305" key="19"/>
<evidence type="ECO:0007829" key="20">
    <source>
        <dbReference type="PDB" id="1Y8O"/>
    </source>
</evidence>
<evidence type="ECO:0007829" key="21">
    <source>
        <dbReference type="PDB" id="1Y8P"/>
    </source>
</evidence>
<evidence type="ECO:0007829" key="22">
    <source>
        <dbReference type="PDB" id="2PNR"/>
    </source>
</evidence>
<evidence type="ECO:0007829" key="23">
    <source>
        <dbReference type="PDB" id="2Q8I"/>
    </source>
</evidence>
<comment type="function">
    <text evidence="5 6 8 9 13 14 16">Inhibits pyruvate dehydrogenase activity by phosphorylation of the E1 subunit PDHA1, and thereby regulates glucose metabolism and aerobic respiration. Can also phosphorylate PDHA2. Decreases glucose utilization and increases fat metabolism in response to prolonged fasting, and as adaptation to a high-fat diet. Plays a role in glucose homeostasis and in maintaining normal blood glucose levels in function of nutrient levels and under starvation. Plays a role in the generation of reactive oxygen species.</text>
</comment>
<comment type="catalytic activity">
    <reaction evidence="5 6 9">
        <text>L-seryl-[pyruvate dehydrogenase E1 alpha subunit] + ATP = O-phospho-L-seryl-[pyruvate dehydrogenase E1 alpha subunit] + ADP + H(+)</text>
        <dbReference type="Rhea" id="RHEA:23052"/>
        <dbReference type="Rhea" id="RHEA-COMP:13689"/>
        <dbReference type="Rhea" id="RHEA-COMP:13690"/>
        <dbReference type="ChEBI" id="CHEBI:15378"/>
        <dbReference type="ChEBI" id="CHEBI:29999"/>
        <dbReference type="ChEBI" id="CHEBI:30616"/>
        <dbReference type="ChEBI" id="CHEBI:83421"/>
        <dbReference type="ChEBI" id="CHEBI:456216"/>
        <dbReference type="EC" id="2.7.11.2"/>
    </reaction>
</comment>
<comment type="activity regulation">
    <text evidence="5 13">Activated by interaction with DLAT. Inhibited by AZD7545, dichloroacetate and radicicol.</text>
</comment>
<comment type="subunit">
    <text evidence="5 7 8 11 13">Homodimer. Interacts with the pyruvate dehydrogenase complex subunit DLAT, and is part of the multimeric pyruvate dehydrogenase complex that contains multiple copies of pyruvate dehydrogenase (E1), dihydrolipoamide acetyltransferase (DLAT, E2) and lipoamide dehydrogenase (DLD, E3).</text>
</comment>
<comment type="interaction">
    <interactant intactId="EBI-1383915">
        <id>Q15120</id>
    </interactant>
    <interactant intactId="EBI-2959723">
        <id>P10515</id>
        <label>DLAT</label>
    </interactant>
    <organismsDiffer>false</organismsDiffer>
    <experiments>3</experiments>
</comment>
<comment type="subcellular location">
    <subcellularLocation>
        <location>Mitochondrion matrix</location>
    </subcellularLocation>
</comment>
<comment type="alternative products">
    <event type="alternative splicing"/>
    <isoform>
        <id>Q15120-1</id>
        <name>1</name>
        <sequence type="displayed"/>
    </isoform>
    <isoform>
        <id>Q15120-2</id>
        <name>2</name>
        <sequence type="described" ref="VSP_043365"/>
    </isoform>
</comment>
<comment type="tissue specificity">
    <text evidence="17">Expressed in heart, skeletal muscle, spinal cord, as well as fetal and adult brain.</text>
</comment>
<comment type="induction">
    <text evidence="12 14 15">Up-regulated in response to hypoxia. Up-regulated in response to fatty acids. Up-regulated by PPARD.</text>
</comment>
<comment type="disease" evidence="17">
    <disease id="DI-03842">
        <name>Charcot-Marie-Tooth disease, X-linked dominant, 6</name>
        <acronym>CMTX6</acronym>
        <description>A form of Charcot-Marie-Tooth disease, a disorder of the peripheral nervous system, characterized by progressive weakness and atrophy, initially of the peroneal muscles and later of the distal muscles of the arms. Charcot-Marie-Tooth disease is classified in two main groups on the basis of electrophysiologic properties and histopathology: primary peripheral demyelinating neuropathies characterized by severely reduced motor nerve conduction velocities (NCVs) (less than 38m/s) and segmental demyelination and remyelination, and primary peripheral axonal neuropathies characterized by normal or mildly reduced NCVs and chronic axonal degeneration and regeneration on nerve biopsy.</description>
        <dbReference type="MIM" id="300905"/>
    </disease>
    <text>The disease is caused by variants affecting the gene represented in this entry.</text>
</comment>
<comment type="similarity">
    <text evidence="19">Belongs to the PDK/BCKDK protein kinase family.</text>
</comment>
<proteinExistence type="evidence at protein level"/>
<feature type="transit peptide" description="Mitochondrion" evidence="2">
    <location>
        <begin position="1"/>
        <end status="unknown"/>
    </location>
</feature>
<feature type="chain" id="PRO_0000023443" description="[Pyruvate dehydrogenase (acetyl-transferring)] kinase isozyme 3, mitochondrial">
    <location>
        <begin status="unknown"/>
        <end position="406"/>
    </location>
</feature>
<feature type="domain" description="Histidine kinase" evidence="3">
    <location>
        <begin position="131"/>
        <end position="362"/>
    </location>
</feature>
<feature type="region of interest" description="Disordered" evidence="4">
    <location>
        <begin position="383"/>
        <end position="406"/>
    </location>
</feature>
<feature type="compositionally biased region" description="Basic and acidic residues" evidence="4">
    <location>
        <begin position="395"/>
        <end position="406"/>
    </location>
</feature>
<feature type="binding site" evidence="8">
    <location>
        <begin position="247"/>
        <end position="254"/>
    </location>
    <ligand>
        <name>ATP</name>
        <dbReference type="ChEBI" id="CHEBI:30616"/>
    </ligand>
</feature>
<feature type="binding site" evidence="8">
    <location>
        <position position="287"/>
    </location>
    <ligand>
        <name>ATP</name>
        <dbReference type="ChEBI" id="CHEBI:30616"/>
    </ligand>
</feature>
<feature type="binding site" evidence="8">
    <location>
        <begin position="306"/>
        <end position="307"/>
    </location>
    <ligand>
        <name>ATP</name>
        <dbReference type="ChEBI" id="CHEBI:30616"/>
    </ligand>
</feature>
<feature type="binding site" evidence="8">
    <location>
        <begin position="323"/>
        <end position="328"/>
    </location>
    <ligand>
        <name>ATP</name>
        <dbReference type="ChEBI" id="CHEBI:30616"/>
    </ligand>
</feature>
<feature type="modified residue" description="N6-succinyllysine" evidence="1">
    <location>
        <position position="278"/>
    </location>
</feature>
<feature type="splice variant" id="VSP_043365" description="In isoform 2." evidence="18">
    <original>Q</original>
    <variation>QDKIKTNRTF</variation>
    <location>
        <position position="406"/>
    </location>
</feature>
<feature type="sequence variant" id="VAR_070081" description="In dbSNP:rs146331370." evidence="17">
    <original>K</original>
    <variation>T</variation>
    <location>
        <position position="114"/>
    </location>
</feature>
<feature type="sequence variant" id="VAR_070082" description="In CMTX6; gain of function; results in a 5-fold increase in kinase activity, decreased sensitivity to pyruvate inhibition, reduced affinity for nucleotides and increased affinity for pyruvate dehydrogenase complex component E2 (PDC-E2), leading to PDC hyperphosphorylation and increased inactivation; dbSNP:rs397515323." evidence="17">
    <original>R</original>
    <variation>H</variation>
    <location>
        <position position="158"/>
    </location>
</feature>
<feature type="sequence variant" id="VAR_042297" description="In a head &amp; neck squamous cell carcinoma sample; somatic mutation." evidence="10">
    <original>E</original>
    <variation>A</variation>
    <location>
        <position position="219"/>
    </location>
</feature>
<feature type="sequence variant" id="VAR_070083" evidence="17">
    <original>Y</original>
    <variation>S</variation>
    <location>
        <position position="334"/>
    </location>
</feature>
<feature type="mutagenesis site" description="No effect on kinase activity; when associated with N-121." evidence="17">
    <original>N</original>
    <variation>H</variation>
    <location>
        <position position="120"/>
    </location>
</feature>
<feature type="mutagenesis site" description="No effect on kinase activity; when associated with H-120." evidence="17">
    <original>D</original>
    <variation>N</variation>
    <location>
        <position position="121"/>
    </location>
</feature>
<feature type="helix" evidence="20">
    <location>
        <begin position="14"/>
        <end position="21"/>
    </location>
</feature>
<feature type="helix" evidence="20">
    <location>
        <begin position="29"/>
        <end position="38"/>
    </location>
</feature>
<feature type="helix" evidence="20">
    <location>
        <begin position="42"/>
        <end position="64"/>
    </location>
</feature>
<feature type="helix" evidence="20">
    <location>
        <begin position="69"/>
        <end position="72"/>
    </location>
</feature>
<feature type="helix" evidence="20">
    <location>
        <begin position="75"/>
        <end position="92"/>
    </location>
</feature>
<feature type="helix" evidence="20">
    <location>
        <begin position="93"/>
        <end position="96"/>
    </location>
</feature>
<feature type="strand" evidence="23">
    <location>
        <begin position="99"/>
        <end position="101"/>
    </location>
</feature>
<feature type="helix" evidence="20">
    <location>
        <begin position="102"/>
        <end position="118"/>
    </location>
</feature>
<feature type="helix" evidence="20">
    <location>
        <begin position="119"/>
        <end position="121"/>
    </location>
</feature>
<feature type="helix" evidence="20">
    <location>
        <begin position="122"/>
        <end position="137"/>
    </location>
</feature>
<feature type="helix" evidence="20">
    <location>
        <begin position="141"/>
        <end position="172"/>
    </location>
</feature>
<feature type="strand" evidence="22">
    <location>
        <begin position="179"/>
        <end position="184"/>
    </location>
</feature>
<feature type="strand" evidence="20">
    <location>
        <begin position="187"/>
        <end position="192"/>
    </location>
</feature>
<feature type="helix" evidence="20">
    <location>
        <begin position="193"/>
        <end position="212"/>
    </location>
</feature>
<feature type="strand" evidence="20">
    <location>
        <begin position="218"/>
        <end position="224"/>
    </location>
</feature>
<feature type="strand" evidence="20">
    <location>
        <begin position="233"/>
        <end position="236"/>
    </location>
</feature>
<feature type="helix" evidence="20">
    <location>
        <begin position="238"/>
        <end position="260"/>
    </location>
</feature>
<feature type="strand" evidence="22">
    <location>
        <begin position="262"/>
        <end position="265"/>
    </location>
</feature>
<feature type="strand" evidence="20">
    <location>
        <begin position="270"/>
        <end position="276"/>
    </location>
</feature>
<feature type="strand" evidence="20">
    <location>
        <begin position="278"/>
        <end position="287"/>
    </location>
</feature>
<feature type="helix" evidence="20">
    <location>
        <begin position="294"/>
        <end position="297"/>
    </location>
</feature>
<feature type="helix" evidence="20">
    <location>
        <begin position="298"/>
        <end position="301"/>
    </location>
</feature>
<feature type="turn" evidence="20">
    <location>
        <begin position="303"/>
        <end position="305"/>
    </location>
</feature>
<feature type="strand" evidence="21">
    <location>
        <begin position="323"/>
        <end position="325"/>
    </location>
</feature>
<feature type="helix" evidence="20">
    <location>
        <begin position="327"/>
        <end position="337"/>
    </location>
</feature>
<feature type="strand" evidence="20">
    <location>
        <begin position="341"/>
        <end position="347"/>
    </location>
</feature>
<feature type="turn" evidence="20">
    <location>
        <begin position="348"/>
        <end position="350"/>
    </location>
</feature>
<feature type="strand" evidence="20">
    <location>
        <begin position="351"/>
        <end position="360"/>
    </location>
</feature>
<feature type="helix" evidence="20">
    <location>
        <begin position="362"/>
        <end position="364"/>
    </location>
</feature>
<feature type="helix" evidence="20">
    <location>
        <begin position="374"/>
        <end position="380"/>
    </location>
</feature>
<protein>
    <recommendedName>
        <fullName>[Pyruvate dehydrogenase (acetyl-transferring)] kinase isozyme 3, mitochondrial</fullName>
        <ecNumber>2.7.11.2</ecNumber>
    </recommendedName>
    <alternativeName>
        <fullName>Pyruvate dehydrogenase kinase isoform 3</fullName>
    </alternativeName>
</protein>
<organism>
    <name type="scientific">Homo sapiens</name>
    <name type="common">Human</name>
    <dbReference type="NCBI Taxonomy" id="9606"/>
    <lineage>
        <taxon>Eukaryota</taxon>
        <taxon>Metazoa</taxon>
        <taxon>Chordata</taxon>
        <taxon>Craniata</taxon>
        <taxon>Vertebrata</taxon>
        <taxon>Euteleostomi</taxon>
        <taxon>Mammalia</taxon>
        <taxon>Eutheria</taxon>
        <taxon>Euarchontoglires</taxon>
        <taxon>Primates</taxon>
        <taxon>Haplorrhini</taxon>
        <taxon>Catarrhini</taxon>
        <taxon>Hominidae</taxon>
        <taxon>Homo</taxon>
    </lineage>
</organism>
<accession>Q15120</accession>
<accession>B4DXG6</accession>
<name>PDK3_HUMAN</name>
<gene>
    <name type="primary">PDK3</name>
    <name type="synonym">PDHK3</name>
</gene>
<dbReference type="EC" id="2.7.11.2"/>
<dbReference type="EMBL" id="L42452">
    <property type="protein sequence ID" value="AAC42011.1"/>
    <property type="molecule type" value="mRNA"/>
</dbReference>
<dbReference type="EMBL" id="AK301965">
    <property type="protein sequence ID" value="BAG63378.1"/>
    <property type="molecule type" value="mRNA"/>
</dbReference>
<dbReference type="EMBL" id="CH471074">
    <property type="protein sequence ID" value="EAW99019.1"/>
    <property type="molecule type" value="Genomic_DNA"/>
</dbReference>
<dbReference type="EMBL" id="BC015948">
    <property type="protein sequence ID" value="AAH15948.1"/>
    <property type="molecule type" value="mRNA"/>
</dbReference>
<dbReference type="CCDS" id="CCDS14212.1">
    <molecule id="Q15120-1"/>
</dbReference>
<dbReference type="CCDS" id="CCDS48088.1">
    <molecule id="Q15120-2"/>
</dbReference>
<dbReference type="PIR" id="I70160">
    <property type="entry name" value="I70160"/>
</dbReference>
<dbReference type="RefSeq" id="NP_001135858.1">
    <molecule id="Q15120-2"/>
    <property type="nucleotide sequence ID" value="NM_001142386.3"/>
</dbReference>
<dbReference type="RefSeq" id="NP_005382.1">
    <molecule id="Q15120-1"/>
    <property type="nucleotide sequence ID" value="NM_005391.5"/>
</dbReference>
<dbReference type="PDB" id="1Y8N">
    <property type="method" value="X-ray"/>
    <property type="resolution" value="2.60 A"/>
    <property type="chains" value="A=9-406"/>
</dbReference>
<dbReference type="PDB" id="1Y8O">
    <property type="method" value="X-ray"/>
    <property type="resolution" value="2.48 A"/>
    <property type="chains" value="A=9-406"/>
</dbReference>
<dbReference type="PDB" id="1Y8P">
    <property type="method" value="X-ray"/>
    <property type="resolution" value="2.63 A"/>
    <property type="chains" value="A=9-406"/>
</dbReference>
<dbReference type="PDB" id="2PNR">
    <property type="method" value="X-ray"/>
    <property type="resolution" value="2.50 A"/>
    <property type="chains" value="A/B/E/F=9-406"/>
</dbReference>
<dbReference type="PDB" id="2Q8I">
    <property type="method" value="X-ray"/>
    <property type="resolution" value="2.60 A"/>
    <property type="chains" value="A=9-406"/>
</dbReference>
<dbReference type="PDBsum" id="1Y8N"/>
<dbReference type="PDBsum" id="1Y8O"/>
<dbReference type="PDBsum" id="1Y8P"/>
<dbReference type="PDBsum" id="2PNR"/>
<dbReference type="PDBsum" id="2Q8I"/>
<dbReference type="SMR" id="Q15120"/>
<dbReference type="BioGRID" id="111191">
    <property type="interactions" value="125"/>
</dbReference>
<dbReference type="DIP" id="DIP-29498N"/>
<dbReference type="FunCoup" id="Q15120">
    <property type="interactions" value="1387"/>
</dbReference>
<dbReference type="IntAct" id="Q15120">
    <property type="interactions" value="66"/>
</dbReference>
<dbReference type="MINT" id="Q15120"/>
<dbReference type="STRING" id="9606.ENSP00000498864"/>
<dbReference type="BindingDB" id="Q15120"/>
<dbReference type="ChEMBL" id="CHEMBL3893"/>
<dbReference type="DrugBank" id="DB03760">
    <property type="generic name" value="Dihydrolipoic Acid"/>
</dbReference>
<dbReference type="DrugBank" id="DB03758">
    <property type="generic name" value="Radicicol"/>
</dbReference>
<dbReference type="DrugCentral" id="Q15120"/>
<dbReference type="GuidetoPHARMACOLOGY" id="2143"/>
<dbReference type="iPTMnet" id="Q15120"/>
<dbReference type="PhosphoSitePlus" id="Q15120"/>
<dbReference type="SwissPalm" id="Q15120"/>
<dbReference type="BioMuta" id="PDK3"/>
<dbReference type="DMDM" id="3183119"/>
<dbReference type="jPOST" id="Q15120"/>
<dbReference type="MassIVE" id="Q15120"/>
<dbReference type="PaxDb" id="9606-ENSP00000387536"/>
<dbReference type="PeptideAtlas" id="Q15120"/>
<dbReference type="ProteomicsDB" id="60447">
    <molecule id="Q15120-1"/>
</dbReference>
<dbReference type="ProteomicsDB" id="60448">
    <molecule id="Q15120-2"/>
</dbReference>
<dbReference type="Pumba" id="Q15120"/>
<dbReference type="Antibodypedia" id="24576">
    <property type="antibodies" value="308 antibodies from 31 providers"/>
</dbReference>
<dbReference type="DNASU" id="5165"/>
<dbReference type="Ensembl" id="ENST00000379162.9">
    <molecule id="Q15120-1"/>
    <property type="protein sequence ID" value="ENSP00000368460.4"/>
    <property type="gene ID" value="ENSG00000067992.17"/>
</dbReference>
<dbReference type="Ensembl" id="ENST00000568479.2">
    <molecule id="Q15120-2"/>
    <property type="protein sequence ID" value="ENSP00000498864.1"/>
    <property type="gene ID" value="ENSG00000067992.17"/>
</dbReference>
<dbReference type="Ensembl" id="ENST00000648777.1">
    <molecule id="Q15120-1"/>
    <property type="protein sequence ID" value="ENSP00000497727.1"/>
    <property type="gene ID" value="ENSG00000067992.17"/>
</dbReference>
<dbReference type="GeneID" id="5165"/>
<dbReference type="KEGG" id="hsa:5165"/>
<dbReference type="MANE-Select" id="ENST00000379162.9">
    <property type="protein sequence ID" value="ENSP00000368460.4"/>
    <property type="RefSeq nucleotide sequence ID" value="NM_005391.5"/>
    <property type="RefSeq protein sequence ID" value="NP_005382.1"/>
</dbReference>
<dbReference type="UCSC" id="uc004dbg.4">
    <molecule id="Q15120-1"/>
    <property type="organism name" value="human"/>
</dbReference>
<dbReference type="AGR" id="HGNC:8811"/>
<dbReference type="CTD" id="5165"/>
<dbReference type="DisGeNET" id="5165"/>
<dbReference type="GeneCards" id="PDK3"/>
<dbReference type="GeneReviews" id="PDK3"/>
<dbReference type="HGNC" id="HGNC:8811">
    <property type="gene designation" value="PDK3"/>
</dbReference>
<dbReference type="HPA" id="ENSG00000067992">
    <property type="expression patterns" value="Low tissue specificity"/>
</dbReference>
<dbReference type="MalaCards" id="PDK3"/>
<dbReference type="MIM" id="300905">
    <property type="type" value="phenotype"/>
</dbReference>
<dbReference type="MIM" id="300906">
    <property type="type" value="gene"/>
</dbReference>
<dbReference type="neXtProt" id="NX_Q15120"/>
<dbReference type="OpenTargets" id="ENSG00000067992"/>
<dbReference type="Orphanet" id="352675">
    <property type="disease" value="X-linked Charcot-Marie-Tooth disease type 6"/>
</dbReference>
<dbReference type="PharmGKB" id="PA33156"/>
<dbReference type="VEuPathDB" id="HostDB:ENSG00000067992"/>
<dbReference type="eggNOG" id="KOG0787">
    <property type="taxonomic scope" value="Eukaryota"/>
</dbReference>
<dbReference type="GeneTree" id="ENSGT01030000234646"/>
<dbReference type="HOGENOM" id="CLU_023861_1_1_1"/>
<dbReference type="InParanoid" id="Q15120"/>
<dbReference type="OMA" id="PIERRYF"/>
<dbReference type="OrthoDB" id="241648at2759"/>
<dbReference type="PAN-GO" id="Q15120">
    <property type="GO annotations" value="4 GO annotations based on evolutionary models"/>
</dbReference>
<dbReference type="PhylomeDB" id="Q15120"/>
<dbReference type="TreeFam" id="TF314918"/>
<dbReference type="BRENDA" id="2.7.11.2">
    <property type="organism ID" value="2681"/>
</dbReference>
<dbReference type="PathwayCommons" id="Q15120"/>
<dbReference type="Reactome" id="R-HSA-204174">
    <property type="pathway name" value="Regulation of pyruvate dehydrogenase (PDH) complex"/>
</dbReference>
<dbReference type="Reactome" id="R-HSA-5362517">
    <property type="pathway name" value="Signaling by Retinoic Acid"/>
</dbReference>
<dbReference type="SignaLink" id="Q15120"/>
<dbReference type="SIGNOR" id="Q15120"/>
<dbReference type="BioGRID-ORCS" id="5165">
    <property type="hits" value="26 hits in 820 CRISPR screens"/>
</dbReference>
<dbReference type="CD-CODE" id="FB4E32DD">
    <property type="entry name" value="Presynaptic clusters and postsynaptic densities"/>
</dbReference>
<dbReference type="ChiTaRS" id="PDK3">
    <property type="organism name" value="human"/>
</dbReference>
<dbReference type="EvolutionaryTrace" id="Q15120"/>
<dbReference type="GeneWiki" id="PDK3"/>
<dbReference type="GenomeRNAi" id="5165"/>
<dbReference type="Pharos" id="Q15120">
    <property type="development level" value="Tchem"/>
</dbReference>
<dbReference type="PRO" id="PR:Q15120"/>
<dbReference type="Proteomes" id="UP000005640">
    <property type="component" value="Chromosome X"/>
</dbReference>
<dbReference type="RNAct" id="Q15120">
    <property type="molecule type" value="protein"/>
</dbReference>
<dbReference type="Bgee" id="ENSG00000067992">
    <property type="expression patterns" value="Expressed in middle temporal gyrus and 192 other cell types or tissues"/>
</dbReference>
<dbReference type="GO" id="GO:0005759">
    <property type="term" value="C:mitochondrial matrix"/>
    <property type="evidence" value="ECO:0000304"/>
    <property type="project" value="Reactome"/>
</dbReference>
<dbReference type="GO" id="GO:0005739">
    <property type="term" value="C:mitochondrion"/>
    <property type="evidence" value="ECO:0000314"/>
    <property type="project" value="HPA"/>
</dbReference>
<dbReference type="GO" id="GO:0005730">
    <property type="term" value="C:nucleolus"/>
    <property type="evidence" value="ECO:0000314"/>
    <property type="project" value="HPA"/>
</dbReference>
<dbReference type="GO" id="GO:0005524">
    <property type="term" value="F:ATP binding"/>
    <property type="evidence" value="ECO:0000314"/>
    <property type="project" value="UniProtKB"/>
</dbReference>
<dbReference type="GO" id="GO:0004672">
    <property type="term" value="F:protein kinase activity"/>
    <property type="evidence" value="ECO:0000314"/>
    <property type="project" value="UniProtKB"/>
</dbReference>
<dbReference type="GO" id="GO:0004674">
    <property type="term" value="F:protein serine/threonine kinase activity"/>
    <property type="evidence" value="ECO:0000314"/>
    <property type="project" value="UniProtKB"/>
</dbReference>
<dbReference type="GO" id="GO:0004740">
    <property type="term" value="F:pyruvate dehydrogenase (acetyl-transferring) kinase activity"/>
    <property type="evidence" value="ECO:0000314"/>
    <property type="project" value="UniProtKB"/>
</dbReference>
<dbReference type="GO" id="GO:0071398">
    <property type="term" value="P:cellular response to fatty acid"/>
    <property type="evidence" value="ECO:0000315"/>
    <property type="project" value="UniProtKB"/>
</dbReference>
<dbReference type="GO" id="GO:0071333">
    <property type="term" value="P:cellular response to glucose stimulus"/>
    <property type="evidence" value="ECO:0000250"/>
    <property type="project" value="UniProtKB"/>
</dbReference>
<dbReference type="GO" id="GO:0097411">
    <property type="term" value="P:hypoxia-inducible factor-1alpha signaling pathway"/>
    <property type="evidence" value="ECO:0000315"/>
    <property type="project" value="UniProtKB"/>
</dbReference>
<dbReference type="GO" id="GO:0018105">
    <property type="term" value="P:peptidyl-serine phosphorylation"/>
    <property type="evidence" value="ECO:0000314"/>
    <property type="project" value="UniProtKB"/>
</dbReference>
<dbReference type="GO" id="GO:0035357">
    <property type="term" value="P:peroxisome proliferator activated receptor signaling pathway"/>
    <property type="evidence" value="ECO:0000315"/>
    <property type="project" value="UniProtKB"/>
</dbReference>
<dbReference type="GO" id="GO:0010510">
    <property type="term" value="P:regulation of acetyl-CoA biosynthetic process from pyruvate"/>
    <property type="evidence" value="ECO:0000315"/>
    <property type="project" value="UniProtKB"/>
</dbReference>
<dbReference type="GO" id="GO:0010906">
    <property type="term" value="P:regulation of glucose metabolic process"/>
    <property type="evidence" value="ECO:0000315"/>
    <property type="project" value="UniProtKB"/>
</dbReference>
<dbReference type="GO" id="GO:2000377">
    <property type="term" value="P:regulation of reactive oxygen species metabolic process"/>
    <property type="evidence" value="ECO:0000315"/>
    <property type="project" value="UniProtKB"/>
</dbReference>
<dbReference type="CDD" id="cd16929">
    <property type="entry name" value="HATPase_PDK-like"/>
    <property type="match status" value="1"/>
</dbReference>
<dbReference type="FunFam" id="1.20.140.20:FF:000001">
    <property type="entry name" value="[Pyruvate dehydrogenase (acetyl-transferring)] kinase isozyme 2, mitochondrial"/>
    <property type="match status" value="1"/>
</dbReference>
<dbReference type="FunFam" id="3.30.565.10:FF:000007">
    <property type="entry name" value="Mitochondrial pyruvate dehydrogenase kinase isoform 2"/>
    <property type="match status" value="1"/>
</dbReference>
<dbReference type="Gene3D" id="1.20.140.20">
    <property type="entry name" value="Alpha-ketoacid/pyruvate dehydrogenase kinase, N-terminal domain"/>
    <property type="match status" value="1"/>
</dbReference>
<dbReference type="Gene3D" id="3.30.565.10">
    <property type="entry name" value="Histidine kinase-like ATPase, C-terminal domain"/>
    <property type="match status" value="1"/>
</dbReference>
<dbReference type="InterPro" id="IPR036784">
    <property type="entry name" value="AK/P_DHK_N_sf"/>
</dbReference>
<dbReference type="InterPro" id="IPR018955">
    <property type="entry name" value="BCDHK/PDK_N"/>
</dbReference>
<dbReference type="InterPro" id="IPR039028">
    <property type="entry name" value="BCKD/PDK"/>
</dbReference>
<dbReference type="InterPro" id="IPR036890">
    <property type="entry name" value="HATPase_C_sf"/>
</dbReference>
<dbReference type="InterPro" id="IPR005467">
    <property type="entry name" value="His_kinase_dom"/>
</dbReference>
<dbReference type="PANTHER" id="PTHR11947:SF21">
    <property type="entry name" value="[PYRUVATE DEHYDROGENASE (ACETYL-TRANSFERRING)] KINASE ISOZYME 3, MITOCHONDRIAL"/>
    <property type="match status" value="1"/>
</dbReference>
<dbReference type="PANTHER" id="PTHR11947">
    <property type="entry name" value="PYRUVATE DEHYDROGENASE KINASE"/>
    <property type="match status" value="1"/>
</dbReference>
<dbReference type="Pfam" id="PF10436">
    <property type="entry name" value="BCDHK_Adom3"/>
    <property type="match status" value="1"/>
</dbReference>
<dbReference type="Pfam" id="PF02518">
    <property type="entry name" value="HATPase_c"/>
    <property type="match status" value="1"/>
</dbReference>
<dbReference type="SMART" id="SM00387">
    <property type="entry name" value="HATPase_c"/>
    <property type="match status" value="1"/>
</dbReference>
<dbReference type="SUPFAM" id="SSF69012">
    <property type="entry name" value="alpha-ketoacid dehydrogenase kinase, N-terminal domain"/>
    <property type="match status" value="1"/>
</dbReference>
<dbReference type="SUPFAM" id="SSF55874">
    <property type="entry name" value="ATPase domain of HSP90 chaperone/DNA topoisomerase II/histidine kinase"/>
    <property type="match status" value="1"/>
</dbReference>
<dbReference type="PROSITE" id="PS50109">
    <property type="entry name" value="HIS_KIN"/>
    <property type="match status" value="1"/>
</dbReference>
<sequence>MRLFRWLLKQPVPKQIERYSRFSPSPLSIKQFLDFGRDNACEKTSYMFLRKELPVRLANTMREVNLLPDNLLNRPSVGLVQSWYMQSFLELLEYENKSPEDPQVLDNFLQVLIKVRNRHNDVVPTMAQGVIEYKEKFGFDPFISTNIQYFLDRFYTNRISFRMLINQHTLLFGGDTNPVHPKHIGSIDPTCNVADVVKDAYETAKMLCEQYYLVAPELEVEEFNAKAPDKPIQVVYVPSHLFHMLFELFKNSMRATVELYEDRKEGYPAVKTLVTLGKEDLSIKISDLGGGVPLRKIDRLFNYMYSTAPRPSLEPTRAAPLAGFGYGLPISRLYARYFQGDLKLYSMEGVGTDAVIYLKALSSESFERLPVFNKSAWRHYKTTPEADDWSNPSSEPRDASKYKAKQ</sequence>
<reference key="1">
    <citation type="journal article" date="1995" name="J. Biol. Chem.">
        <title>Diversity of the pyruvate dehydrogenase kinase gene family in humans.</title>
        <authorList>
            <person name="Gudi R."/>
            <person name="Bowker-Kinley M.M."/>
            <person name="Kedishvili N.Y."/>
            <person name="Zhao Y."/>
            <person name="Popov K.M."/>
        </authorList>
    </citation>
    <scope>NUCLEOTIDE SEQUENCE [MRNA] (ISOFORM 1)</scope>
    <source>
        <tissue>Liver</tissue>
    </source>
</reference>
<reference key="2">
    <citation type="journal article" date="2004" name="Nat. Genet.">
        <title>Complete sequencing and characterization of 21,243 full-length human cDNAs.</title>
        <authorList>
            <person name="Ota T."/>
            <person name="Suzuki Y."/>
            <person name="Nishikawa T."/>
            <person name="Otsuki T."/>
            <person name="Sugiyama T."/>
            <person name="Irie R."/>
            <person name="Wakamatsu A."/>
            <person name="Hayashi K."/>
            <person name="Sato H."/>
            <person name="Nagai K."/>
            <person name="Kimura K."/>
            <person name="Makita H."/>
            <person name="Sekine M."/>
            <person name="Obayashi M."/>
            <person name="Nishi T."/>
            <person name="Shibahara T."/>
            <person name="Tanaka T."/>
            <person name="Ishii S."/>
            <person name="Yamamoto J."/>
            <person name="Saito K."/>
            <person name="Kawai Y."/>
            <person name="Isono Y."/>
            <person name="Nakamura Y."/>
            <person name="Nagahari K."/>
            <person name="Murakami K."/>
            <person name="Yasuda T."/>
            <person name="Iwayanagi T."/>
            <person name="Wagatsuma M."/>
            <person name="Shiratori A."/>
            <person name="Sudo H."/>
            <person name="Hosoiri T."/>
            <person name="Kaku Y."/>
            <person name="Kodaira H."/>
            <person name="Kondo H."/>
            <person name="Sugawara M."/>
            <person name="Takahashi M."/>
            <person name="Kanda K."/>
            <person name="Yokoi T."/>
            <person name="Furuya T."/>
            <person name="Kikkawa E."/>
            <person name="Omura Y."/>
            <person name="Abe K."/>
            <person name="Kamihara K."/>
            <person name="Katsuta N."/>
            <person name="Sato K."/>
            <person name="Tanikawa M."/>
            <person name="Yamazaki M."/>
            <person name="Ninomiya K."/>
            <person name="Ishibashi T."/>
            <person name="Yamashita H."/>
            <person name="Murakawa K."/>
            <person name="Fujimori K."/>
            <person name="Tanai H."/>
            <person name="Kimata M."/>
            <person name="Watanabe M."/>
            <person name="Hiraoka S."/>
            <person name="Chiba Y."/>
            <person name="Ishida S."/>
            <person name="Ono Y."/>
            <person name="Takiguchi S."/>
            <person name="Watanabe S."/>
            <person name="Yosida M."/>
            <person name="Hotuta T."/>
            <person name="Kusano J."/>
            <person name="Kanehori K."/>
            <person name="Takahashi-Fujii A."/>
            <person name="Hara H."/>
            <person name="Tanase T.-O."/>
            <person name="Nomura Y."/>
            <person name="Togiya S."/>
            <person name="Komai F."/>
            <person name="Hara R."/>
            <person name="Takeuchi K."/>
            <person name="Arita M."/>
            <person name="Imose N."/>
            <person name="Musashino K."/>
            <person name="Yuuki H."/>
            <person name="Oshima A."/>
            <person name="Sasaki N."/>
            <person name="Aotsuka S."/>
            <person name="Yoshikawa Y."/>
            <person name="Matsunawa H."/>
            <person name="Ichihara T."/>
            <person name="Shiohata N."/>
            <person name="Sano S."/>
            <person name="Moriya S."/>
            <person name="Momiyama H."/>
            <person name="Satoh N."/>
            <person name="Takami S."/>
            <person name="Terashima Y."/>
            <person name="Suzuki O."/>
            <person name="Nakagawa S."/>
            <person name="Senoh A."/>
            <person name="Mizoguchi H."/>
            <person name="Goto Y."/>
            <person name="Shimizu F."/>
            <person name="Wakebe H."/>
            <person name="Hishigaki H."/>
            <person name="Watanabe T."/>
            <person name="Sugiyama A."/>
            <person name="Takemoto M."/>
            <person name="Kawakami B."/>
            <person name="Yamazaki M."/>
            <person name="Watanabe K."/>
            <person name="Kumagai A."/>
            <person name="Itakura S."/>
            <person name="Fukuzumi Y."/>
            <person name="Fujimori Y."/>
            <person name="Komiyama M."/>
            <person name="Tashiro H."/>
            <person name="Tanigami A."/>
            <person name="Fujiwara T."/>
            <person name="Ono T."/>
            <person name="Yamada K."/>
            <person name="Fujii Y."/>
            <person name="Ozaki K."/>
            <person name="Hirao M."/>
            <person name="Ohmori Y."/>
            <person name="Kawabata A."/>
            <person name="Hikiji T."/>
            <person name="Kobatake N."/>
            <person name="Inagaki H."/>
            <person name="Ikema Y."/>
            <person name="Okamoto S."/>
            <person name="Okitani R."/>
            <person name="Kawakami T."/>
            <person name="Noguchi S."/>
            <person name="Itoh T."/>
            <person name="Shigeta K."/>
            <person name="Senba T."/>
            <person name="Matsumura K."/>
            <person name="Nakajima Y."/>
            <person name="Mizuno T."/>
            <person name="Morinaga M."/>
            <person name="Sasaki M."/>
            <person name="Togashi T."/>
            <person name="Oyama M."/>
            <person name="Hata H."/>
            <person name="Watanabe M."/>
            <person name="Komatsu T."/>
            <person name="Mizushima-Sugano J."/>
            <person name="Satoh T."/>
            <person name="Shirai Y."/>
            <person name="Takahashi Y."/>
            <person name="Nakagawa K."/>
            <person name="Okumura K."/>
            <person name="Nagase T."/>
            <person name="Nomura N."/>
            <person name="Kikuchi H."/>
            <person name="Masuho Y."/>
            <person name="Yamashita R."/>
            <person name="Nakai K."/>
            <person name="Yada T."/>
            <person name="Nakamura Y."/>
            <person name="Ohara O."/>
            <person name="Isogai T."/>
            <person name="Sugano S."/>
        </authorList>
    </citation>
    <scope>NUCLEOTIDE SEQUENCE [LARGE SCALE MRNA] (ISOFORM 2)</scope>
    <source>
        <tissue>Testis</tissue>
    </source>
</reference>
<reference key="3">
    <citation type="submission" date="2005-07" db="EMBL/GenBank/DDBJ databases">
        <authorList>
            <person name="Mural R.J."/>
            <person name="Istrail S."/>
            <person name="Sutton G."/>
            <person name="Florea L."/>
            <person name="Halpern A.L."/>
            <person name="Mobarry C.M."/>
            <person name="Lippert R."/>
            <person name="Walenz B."/>
            <person name="Shatkay H."/>
            <person name="Dew I."/>
            <person name="Miller J.R."/>
            <person name="Flanigan M.J."/>
            <person name="Edwards N.J."/>
            <person name="Bolanos R."/>
            <person name="Fasulo D."/>
            <person name="Halldorsson B.V."/>
            <person name="Hannenhalli S."/>
            <person name="Turner R."/>
            <person name="Yooseph S."/>
            <person name="Lu F."/>
            <person name="Nusskern D.R."/>
            <person name="Shue B.C."/>
            <person name="Zheng X.H."/>
            <person name="Zhong F."/>
            <person name="Delcher A.L."/>
            <person name="Huson D.H."/>
            <person name="Kravitz S.A."/>
            <person name="Mouchard L."/>
            <person name="Reinert K."/>
            <person name="Remington K.A."/>
            <person name="Clark A.G."/>
            <person name="Waterman M.S."/>
            <person name="Eichler E.E."/>
            <person name="Adams M.D."/>
            <person name="Hunkapiller M.W."/>
            <person name="Myers E.W."/>
            <person name="Venter J.C."/>
        </authorList>
    </citation>
    <scope>NUCLEOTIDE SEQUENCE [LARGE SCALE GENOMIC DNA]</scope>
</reference>
<reference key="4">
    <citation type="journal article" date="2004" name="Genome Res.">
        <title>The status, quality, and expansion of the NIH full-length cDNA project: the Mammalian Gene Collection (MGC).</title>
        <authorList>
            <consortium name="The MGC Project Team"/>
        </authorList>
    </citation>
    <scope>NUCLEOTIDE SEQUENCE [LARGE SCALE MRNA] (ISOFORM 1)</scope>
    <source>
        <tissue>Skin</tissue>
    </source>
</reference>
<reference key="5">
    <citation type="journal article" date="2000" name="J. Biol. Chem.">
        <title>Marked differences between two isoforms of human pyruvate dehydrogenase kinase.</title>
        <authorList>
            <person name="Baker J.C."/>
            <person name="Yan X."/>
            <person name="Peng T."/>
            <person name="Kasten S."/>
            <person name="Roche T.E."/>
        </authorList>
    </citation>
    <scope>CATALYTIC ACTIVITY</scope>
    <scope>FUNCTION</scope>
    <scope>INTERACTION WITH DLAT</scope>
    <scope>ACTIVITY REGULATION</scope>
</reference>
<reference key="6">
    <citation type="journal article" date="2001" name="J. Biol. Chem.">
        <title>Site specificity of four pyruvate dehydrogenase kinase isoenzymes toward the three phosphorylation sites of human pyruvate dehydrogenase.</title>
        <authorList>
            <person name="Korotchkina L.G."/>
            <person name="Patel M.S."/>
        </authorList>
    </citation>
    <scope>CATALYTIC ACTIVITY</scope>
    <scope>FUNCTION</scope>
</reference>
<reference key="7">
    <citation type="journal article" date="2002" name="Biochem. J.">
        <title>Interaction between the individual isoenzymes of pyruvate dehydrogenase kinase and the inner lipoyl-bearing domain of transacetylase component of pyruvate dehydrogenase complex.</title>
        <authorList>
            <person name="Tuganova A."/>
            <person name="Boulatnikov I."/>
            <person name="Popov K.M."/>
        </authorList>
    </citation>
    <scope>INTERACTION WITH DLAT</scope>
</reference>
<reference key="8">
    <citation type="journal article" date="2006" name="J. Biol. Chem.">
        <title>Characterization of testis-specific isoenzyme of human pyruvate dehydrogenase.</title>
        <authorList>
            <person name="Korotchkina L.G."/>
            <person name="Sidhu S."/>
            <person name="Patel M.S."/>
        </authorList>
    </citation>
    <scope>CATALYTIC ACTIVITY</scope>
    <scope>FUNCTION</scope>
</reference>
<reference key="9">
    <citation type="journal article" date="2007" name="J. Mol. Biol.">
        <title>Three members of the human pyruvate dehydrogenase kinase gene family are direct targets of the peroxisome proliferator-activated receptor beta/delta.</title>
        <authorList>
            <person name="Degenhardt T."/>
            <person name="Saramaki A."/>
            <person name="Malinen M."/>
            <person name="Rieck M."/>
            <person name="Vaisanen S."/>
            <person name="Huotari A."/>
            <person name="Herzig K.H."/>
            <person name="Muller R."/>
            <person name="Carlberg C."/>
        </authorList>
    </citation>
    <scope>INDUCTION BY PPARD</scope>
</reference>
<reference key="10">
    <citation type="journal article" date="2008" name="J. Biol. Chem.">
        <title>Induction of pyruvate dehydrogenase kinase-3 by hypoxia-inducible factor-1 promotes metabolic switch and drug resistance.</title>
        <authorList>
            <person name="Lu C.W."/>
            <person name="Lin S.C."/>
            <person name="Chen K.F."/>
            <person name="Lai Y.Y."/>
            <person name="Tsai S.J."/>
        </authorList>
    </citation>
    <scope>FUNCTION</scope>
    <scope>INDUCTION</scope>
</reference>
<reference key="11">
    <citation type="journal article" date="2011" name="Int. J. Cancer">
        <title>Butyrate elicits a metabolic switch in human colon cancer cells by targeting the pyruvate dehydrogenase complex.</title>
        <authorList>
            <person name="Blouin J.M."/>
            <person name="Penot G."/>
            <person name="Collinet M."/>
            <person name="Nacfer M."/>
            <person name="Forest C."/>
            <person name="Laurent-Puig P."/>
            <person name="Coumoul X."/>
            <person name="Barouki R."/>
            <person name="Benelli C."/>
            <person name="Bortoli S."/>
        </authorList>
    </citation>
    <scope>INDUCTION</scope>
</reference>
<reference key="12">
    <citation type="journal article" date="2011" name="Sci. Signal.">
        <title>System-wide temporal characterization of the proteome and phosphoproteome of human embryonic stem cell differentiation.</title>
        <authorList>
            <person name="Rigbolt K.T."/>
            <person name="Prokhorova T.A."/>
            <person name="Akimov V."/>
            <person name="Henningsen J."/>
            <person name="Johansen P.T."/>
            <person name="Kratchmarova I."/>
            <person name="Kassem M."/>
            <person name="Mann M."/>
            <person name="Olsen J.V."/>
            <person name="Blagoev B."/>
        </authorList>
    </citation>
    <scope>IDENTIFICATION BY MASS SPECTROMETRY [LARGE SCALE ANALYSIS]</scope>
</reference>
<reference key="13">
    <citation type="journal article" date="2012" name="Cancer Res.">
        <title>Inactivation of the HIF-1alpha/PDK3 signaling axis drives melanoma toward mitochondrial oxidative metabolism and potentiates the therapeutic activity of pro-oxidants.</title>
        <authorList>
            <person name="Kluza J."/>
            <person name="Corazao-Rozas P."/>
            <person name="Touil Y."/>
            <person name="Jendoubi M."/>
            <person name="Maire C."/>
            <person name="Guerreschi P."/>
            <person name="Jonneaux A."/>
            <person name="Ballot C."/>
            <person name="Balayssac S."/>
            <person name="Valable S."/>
            <person name="Corroyer-Dulmont A."/>
            <person name="Bernaudin M."/>
            <person name="Malet-Martino M."/>
            <person name="de Lassalle E.M."/>
            <person name="Maboudou P."/>
            <person name="Formstecher P."/>
            <person name="Polakowska R."/>
            <person name="Mortier L."/>
            <person name="Marchetti P."/>
        </authorList>
    </citation>
    <scope>FUNCTION</scope>
</reference>
<reference key="14">
    <citation type="journal article" date="2015" name="Proteomics">
        <title>N-terminome analysis of the human mitochondrial proteome.</title>
        <authorList>
            <person name="Vaca Jacome A.S."/>
            <person name="Rabilloud T."/>
            <person name="Schaeffer-Reiss C."/>
            <person name="Rompais M."/>
            <person name="Ayoub D."/>
            <person name="Lane L."/>
            <person name="Bairoch A."/>
            <person name="Van Dorsselaer A."/>
            <person name="Carapito C."/>
        </authorList>
    </citation>
    <scope>IDENTIFICATION BY MASS SPECTROMETRY [LARGE SCALE ANALYSIS]</scope>
</reference>
<reference key="15">
    <citation type="journal article" date="2005" name="EMBO J.">
        <title>Crystal structure of pyruvate dehydrogenase kinase 3 bound to lipoyl domain 2 of human pyruvate dehydrogenase complex.</title>
        <authorList>
            <person name="Kato M."/>
            <person name="Chuang J.L."/>
            <person name="Tso S.C."/>
            <person name="Wynn R.M."/>
            <person name="Chuang D.T."/>
        </authorList>
    </citation>
    <scope>X-RAY CRYSTALLOGRAPHY (2.48 ANGSTROMS) OF 9-406 IN COMPLEX WITH ATP</scope>
    <scope>FUNCTION</scope>
    <scope>INTERACTION WITH DLAT</scope>
</reference>
<reference key="16">
    <citation type="journal article" date="2007" name="J. Mol. Biol.">
        <title>Crystal structure of an asymmetric complex of pyruvate dehydrogenase kinase 3 with lipoyl domain 2 and its biological implications.</title>
        <authorList>
            <person name="Devedjiev Y."/>
            <person name="Steussy C.N."/>
            <person name="Vassylyev D.G."/>
        </authorList>
    </citation>
    <scope>X-RAY CRYSTALLOGRAPHY (2.5 ANGSTROMS) OF 9-406</scope>
    <scope>INTERACTION WITH DLAT</scope>
</reference>
<reference key="17">
    <citation type="journal article" date="2007" name="Structure">
        <title>Distinct structural mechanisms for inhibition of pyruvate dehydrogenase kinase isoforms by AZD7545, dichloroacetate, and radicicol.</title>
        <authorList>
            <person name="Kato M."/>
            <person name="Li J."/>
            <person name="Chuang J.L."/>
            <person name="Chuang D.T."/>
        </authorList>
    </citation>
    <scope>X-RAY CRYSTALLOGRAPHY (2.6 ANGSTROMS) OF 9-406 IN COMPLEX WITH THE INHIBITOR RADICICOL</scope>
    <scope>FUNCTION</scope>
    <scope>ACTIVITY REGULATION</scope>
    <scope>INTERACTION WITH DLAT</scope>
</reference>
<reference key="18">
    <citation type="journal article" date="2007" name="Nature">
        <title>Patterns of somatic mutation in human cancer genomes.</title>
        <authorList>
            <person name="Greenman C."/>
            <person name="Stephens P."/>
            <person name="Smith R."/>
            <person name="Dalgliesh G.L."/>
            <person name="Hunter C."/>
            <person name="Bignell G."/>
            <person name="Davies H."/>
            <person name="Teague J."/>
            <person name="Butler A."/>
            <person name="Stevens C."/>
            <person name="Edkins S."/>
            <person name="O'Meara S."/>
            <person name="Vastrik I."/>
            <person name="Schmidt E.E."/>
            <person name="Avis T."/>
            <person name="Barthorpe S."/>
            <person name="Bhamra G."/>
            <person name="Buck G."/>
            <person name="Choudhury B."/>
            <person name="Clements J."/>
            <person name="Cole J."/>
            <person name="Dicks E."/>
            <person name="Forbes S."/>
            <person name="Gray K."/>
            <person name="Halliday K."/>
            <person name="Harrison R."/>
            <person name="Hills K."/>
            <person name="Hinton J."/>
            <person name="Jenkinson A."/>
            <person name="Jones D."/>
            <person name="Menzies A."/>
            <person name="Mironenko T."/>
            <person name="Perry J."/>
            <person name="Raine K."/>
            <person name="Richardson D."/>
            <person name="Shepherd R."/>
            <person name="Small A."/>
            <person name="Tofts C."/>
            <person name="Varian J."/>
            <person name="Webb T."/>
            <person name="West S."/>
            <person name="Widaa S."/>
            <person name="Yates A."/>
            <person name="Cahill D.P."/>
            <person name="Louis D.N."/>
            <person name="Goldstraw P."/>
            <person name="Nicholson A.G."/>
            <person name="Brasseur F."/>
            <person name="Looijenga L."/>
            <person name="Weber B.L."/>
            <person name="Chiew Y.-E."/>
            <person name="DeFazio A."/>
            <person name="Greaves M.F."/>
            <person name="Green A.R."/>
            <person name="Campbell P."/>
            <person name="Birney E."/>
            <person name="Easton D.F."/>
            <person name="Chenevix-Trench G."/>
            <person name="Tan M.-H."/>
            <person name="Khoo S.K."/>
            <person name="Teh B.T."/>
            <person name="Yuen S.T."/>
            <person name="Leung S.Y."/>
            <person name="Wooster R."/>
            <person name="Futreal P.A."/>
            <person name="Stratton M.R."/>
        </authorList>
    </citation>
    <scope>VARIANT [LARGE SCALE ANALYSIS] ALA-219</scope>
</reference>
<reference key="19">
    <citation type="journal article" date="2013" name="Hum. Mol. Genet.">
        <title>A new locus for X-linked dominant Charcot-Marie-Tooth disease (CMTX6) is caused by mutations in the pyruvate dehydrogenase kinase isoenzyme 3 (PDK3) gene.</title>
        <authorList>
            <person name="Kennerson M.L."/>
            <person name="Yiu E.M."/>
            <person name="Chuang D.T."/>
            <person name="Kidambi A."/>
            <person name="Tso S.C."/>
            <person name="Ly C."/>
            <person name="Chaudhry R."/>
            <person name="Drew A.P."/>
            <person name="Rance G."/>
            <person name="Delatycki M.B."/>
            <person name="Zuchner S."/>
            <person name="Ryan M.M."/>
            <person name="Nicholson G.A."/>
        </authorList>
    </citation>
    <scope>VARIANT CMTX6 HIS-158</scope>
    <scope>VARIANTS THR-114 AND SER-334</scope>
    <scope>CHARACTERIZATION OF VARIANT CMTX6 HIS-158</scope>
    <scope>TISSUE SPECIFICITY</scope>
    <scope>MUTAGENESIS OF ASN-120 AND ASP-121</scope>
</reference>
<keyword id="KW-0002">3D-structure</keyword>
<keyword id="KW-0025">Alternative splicing</keyword>
<keyword id="KW-0067">ATP-binding</keyword>
<keyword id="KW-0144">Charcot-Marie-Tooth disease</keyword>
<keyword id="KW-0225">Disease variant</keyword>
<keyword id="KW-0418">Kinase</keyword>
<keyword id="KW-0496">Mitochondrion</keyword>
<keyword id="KW-0523">Neurodegeneration</keyword>
<keyword id="KW-0622">Neuropathy</keyword>
<keyword id="KW-0547">Nucleotide-binding</keyword>
<keyword id="KW-1267">Proteomics identification</keyword>
<keyword id="KW-1185">Reference proteome</keyword>
<keyword id="KW-0808">Transferase</keyword>
<keyword id="KW-0809">Transit peptide</keyword>